<sequence>MSLWFLVFLSVLQGVTELFPVSSLGHTLLVPALFGMHIDKHAPQLLPFLVALHLGTALALLWYFRARWIALISGFFAQLGGRKNDDGHLMWALIIGTIPTGIVGLLLEKRLERVFHDLRIVAVALIINGVLLWVGDRIQRSRAHQAPEKMTFKQAFFVGLAQIGALIPGFSRSGLTMIAGNVAGLTAEKAAEFSFLLGTPIIFAAGVLELPKLFHARDQLMDALLGGVLTAIAAYLSVRFLMRYFEGRGRLASFGVYCVIAGVFFLGWFMLHPQPV</sequence>
<keyword id="KW-0046">Antibiotic resistance</keyword>
<keyword id="KW-0997">Cell inner membrane</keyword>
<keyword id="KW-1003">Cell membrane</keyword>
<keyword id="KW-0133">Cell shape</keyword>
<keyword id="KW-0961">Cell wall biogenesis/degradation</keyword>
<keyword id="KW-0378">Hydrolase</keyword>
<keyword id="KW-0472">Membrane</keyword>
<keyword id="KW-0573">Peptidoglycan synthesis</keyword>
<keyword id="KW-0812">Transmembrane</keyword>
<keyword id="KW-1133">Transmembrane helix</keyword>
<feature type="chain" id="PRO_0000290694" description="Undecaprenyl-diphosphatase 2">
    <location>
        <begin position="1"/>
        <end position="276"/>
    </location>
</feature>
<feature type="transmembrane region" description="Helical" evidence="1">
    <location>
        <begin position="1"/>
        <end position="21"/>
    </location>
</feature>
<feature type="transmembrane region" description="Helical" evidence="1">
    <location>
        <begin position="44"/>
        <end position="64"/>
    </location>
</feature>
<feature type="transmembrane region" description="Helical" evidence="1">
    <location>
        <begin position="87"/>
        <end position="107"/>
    </location>
</feature>
<feature type="transmembrane region" description="Helical" evidence="1">
    <location>
        <begin position="114"/>
        <end position="134"/>
    </location>
</feature>
<feature type="transmembrane region" description="Helical" evidence="1">
    <location>
        <begin position="150"/>
        <end position="170"/>
    </location>
</feature>
<feature type="transmembrane region" description="Helical" evidence="1">
    <location>
        <begin position="190"/>
        <end position="210"/>
    </location>
</feature>
<feature type="transmembrane region" description="Helical" evidence="1">
    <location>
        <begin position="220"/>
        <end position="240"/>
    </location>
</feature>
<feature type="transmembrane region" description="Helical" evidence="1">
    <location>
        <begin position="251"/>
        <end position="271"/>
    </location>
</feature>
<gene>
    <name evidence="1" type="primary">uppP2</name>
    <name type="ordered locus">Bamb_1204</name>
</gene>
<name>UPPP2_BURCM</name>
<accession>Q0BGG1</accession>
<comment type="function">
    <text evidence="1">Catalyzes the dephosphorylation of undecaprenyl diphosphate (UPP). Confers resistance to bacitracin.</text>
</comment>
<comment type="catalytic activity">
    <reaction evidence="1">
        <text>di-trans,octa-cis-undecaprenyl diphosphate + H2O = di-trans,octa-cis-undecaprenyl phosphate + phosphate + H(+)</text>
        <dbReference type="Rhea" id="RHEA:28094"/>
        <dbReference type="ChEBI" id="CHEBI:15377"/>
        <dbReference type="ChEBI" id="CHEBI:15378"/>
        <dbReference type="ChEBI" id="CHEBI:43474"/>
        <dbReference type="ChEBI" id="CHEBI:58405"/>
        <dbReference type="ChEBI" id="CHEBI:60392"/>
        <dbReference type="EC" id="3.6.1.27"/>
    </reaction>
</comment>
<comment type="subcellular location">
    <subcellularLocation>
        <location evidence="1">Cell inner membrane</location>
        <topology evidence="1">Multi-pass membrane protein</topology>
    </subcellularLocation>
</comment>
<comment type="miscellaneous">
    <text>Bacitracin is thought to be involved in the inhibition of peptidoglycan synthesis by sequestering undecaprenyl diphosphate, thereby reducing the pool of lipid carrier available.</text>
</comment>
<comment type="similarity">
    <text evidence="1">Belongs to the UppP family.</text>
</comment>
<dbReference type="EC" id="3.6.1.27" evidence="1"/>
<dbReference type="EMBL" id="CP000440">
    <property type="protein sequence ID" value="ABI86762.1"/>
    <property type="molecule type" value="Genomic_DNA"/>
</dbReference>
<dbReference type="RefSeq" id="WP_011656527.1">
    <property type="nucleotide sequence ID" value="NC_008390.1"/>
</dbReference>
<dbReference type="SMR" id="Q0BGG1"/>
<dbReference type="GeneID" id="93083392"/>
<dbReference type="KEGG" id="bam:Bamb_1204"/>
<dbReference type="PATRIC" id="fig|339670.21.peg.355"/>
<dbReference type="eggNOG" id="COG1968">
    <property type="taxonomic scope" value="Bacteria"/>
</dbReference>
<dbReference type="Proteomes" id="UP000000662">
    <property type="component" value="Chromosome 1"/>
</dbReference>
<dbReference type="GO" id="GO:0005886">
    <property type="term" value="C:plasma membrane"/>
    <property type="evidence" value="ECO:0007669"/>
    <property type="project" value="UniProtKB-SubCell"/>
</dbReference>
<dbReference type="GO" id="GO:0050380">
    <property type="term" value="F:undecaprenyl-diphosphatase activity"/>
    <property type="evidence" value="ECO:0007669"/>
    <property type="project" value="UniProtKB-UniRule"/>
</dbReference>
<dbReference type="GO" id="GO:0071555">
    <property type="term" value="P:cell wall organization"/>
    <property type="evidence" value="ECO:0007669"/>
    <property type="project" value="UniProtKB-KW"/>
</dbReference>
<dbReference type="GO" id="GO:0009252">
    <property type="term" value="P:peptidoglycan biosynthetic process"/>
    <property type="evidence" value="ECO:0007669"/>
    <property type="project" value="UniProtKB-KW"/>
</dbReference>
<dbReference type="GO" id="GO:0008360">
    <property type="term" value="P:regulation of cell shape"/>
    <property type="evidence" value="ECO:0007669"/>
    <property type="project" value="UniProtKB-KW"/>
</dbReference>
<dbReference type="GO" id="GO:0046677">
    <property type="term" value="P:response to antibiotic"/>
    <property type="evidence" value="ECO:0007669"/>
    <property type="project" value="UniProtKB-UniRule"/>
</dbReference>
<dbReference type="HAMAP" id="MF_01006">
    <property type="entry name" value="Undec_diphosphatase"/>
    <property type="match status" value="1"/>
</dbReference>
<dbReference type="InterPro" id="IPR003824">
    <property type="entry name" value="UppP"/>
</dbReference>
<dbReference type="PANTHER" id="PTHR30622">
    <property type="entry name" value="UNDECAPRENYL-DIPHOSPHATASE"/>
    <property type="match status" value="1"/>
</dbReference>
<dbReference type="PANTHER" id="PTHR30622:SF4">
    <property type="entry name" value="UNDECAPRENYL-DIPHOSPHATASE"/>
    <property type="match status" value="1"/>
</dbReference>
<dbReference type="Pfam" id="PF02673">
    <property type="entry name" value="BacA"/>
    <property type="match status" value="1"/>
</dbReference>
<organism>
    <name type="scientific">Burkholderia ambifaria (strain ATCC BAA-244 / DSM 16087 / CCUG 44356 / LMG 19182 / AMMD)</name>
    <name type="common">Burkholderia cepacia (strain AMMD)</name>
    <dbReference type="NCBI Taxonomy" id="339670"/>
    <lineage>
        <taxon>Bacteria</taxon>
        <taxon>Pseudomonadati</taxon>
        <taxon>Pseudomonadota</taxon>
        <taxon>Betaproteobacteria</taxon>
        <taxon>Burkholderiales</taxon>
        <taxon>Burkholderiaceae</taxon>
        <taxon>Burkholderia</taxon>
        <taxon>Burkholderia cepacia complex</taxon>
    </lineage>
</organism>
<reference key="1">
    <citation type="submission" date="2006-08" db="EMBL/GenBank/DDBJ databases">
        <title>Complete sequence of chromosome 1 of Burkholderia cepacia AMMD.</title>
        <authorList>
            <person name="Copeland A."/>
            <person name="Lucas S."/>
            <person name="Lapidus A."/>
            <person name="Barry K."/>
            <person name="Detter J.C."/>
            <person name="Glavina del Rio T."/>
            <person name="Hammon N."/>
            <person name="Israni S."/>
            <person name="Pitluck S."/>
            <person name="Bruce D."/>
            <person name="Chain P."/>
            <person name="Malfatti S."/>
            <person name="Shin M."/>
            <person name="Vergez L."/>
            <person name="Schmutz J."/>
            <person name="Larimer F."/>
            <person name="Land M."/>
            <person name="Hauser L."/>
            <person name="Kyrpides N."/>
            <person name="Kim E."/>
            <person name="Parke J."/>
            <person name="Coenye T."/>
            <person name="Konstantinidis K."/>
            <person name="Ramette A."/>
            <person name="Tiedje J."/>
            <person name="Richardson P."/>
        </authorList>
    </citation>
    <scope>NUCLEOTIDE SEQUENCE [LARGE SCALE GENOMIC DNA]</scope>
    <source>
        <strain>ATCC BAA-244 / DSM 16087 / CCUG 44356 / LMG 19182 / AMMD</strain>
    </source>
</reference>
<protein>
    <recommendedName>
        <fullName evidence="1">Undecaprenyl-diphosphatase 2</fullName>
        <ecNumber evidence="1">3.6.1.27</ecNumber>
    </recommendedName>
    <alternativeName>
        <fullName evidence="1">Bacitracin resistance protein 2</fullName>
    </alternativeName>
    <alternativeName>
        <fullName evidence="1">Undecaprenyl pyrophosphate phosphatase 2</fullName>
    </alternativeName>
</protein>
<evidence type="ECO:0000255" key="1">
    <source>
        <dbReference type="HAMAP-Rule" id="MF_01006"/>
    </source>
</evidence>
<proteinExistence type="inferred from homology"/>